<feature type="chain" id="PRO_0000085535" description="4-hydroxyphenylacetate 3-monooxygenase reductase component">
    <location>
        <begin position="1"/>
        <end position="170"/>
    </location>
</feature>
<feature type="sequence conflict" description="In Ref. 2; AAO69442." evidence="2" ref="2">
    <original>V</original>
    <variation>A</variation>
    <location>
        <position position="87"/>
    </location>
</feature>
<sequence>MQVDEQRLRFRDAMASLAAAVNIVTTAGHAGRCGITATAVCSVTDTPPSVMVCINANSAMNPVFQGNGRLCINVLNHEQELMARHFVGMTGMAMEERFHQPCWQNGPLGQPVLNGALASLEGEISEVQTIGTHLVYLVAIKNIILSQEGHGLIYFKRRFHPVRLEMEAPV</sequence>
<dbReference type="EC" id="1.5.1.36"/>
<dbReference type="EMBL" id="AL513382">
    <property type="protein sequence ID" value="CAD08224.1"/>
    <property type="molecule type" value="Genomic_DNA"/>
</dbReference>
<dbReference type="EMBL" id="AE014613">
    <property type="protein sequence ID" value="AAO69442.1"/>
    <property type="molecule type" value="Genomic_DNA"/>
</dbReference>
<dbReference type="RefSeq" id="NP_455595.1">
    <property type="nucleotide sequence ID" value="NC_003198.1"/>
</dbReference>
<dbReference type="RefSeq" id="WP_001195559.1">
    <property type="nucleotide sequence ID" value="NZ_QXGZ01000060.1"/>
</dbReference>
<dbReference type="SMR" id="Q8Z7Q5"/>
<dbReference type="STRING" id="220341.gene:17585103"/>
<dbReference type="KEGG" id="stt:t1821"/>
<dbReference type="KEGG" id="sty:STY1130"/>
<dbReference type="PATRIC" id="fig|220341.7.peg.1132"/>
<dbReference type="eggNOG" id="COG1853">
    <property type="taxonomic scope" value="Bacteria"/>
</dbReference>
<dbReference type="HOGENOM" id="CLU_059021_2_2_6"/>
<dbReference type="OMA" id="VCINRNS"/>
<dbReference type="UniPathway" id="UPA00208">
    <property type="reaction ID" value="UER00416"/>
</dbReference>
<dbReference type="Proteomes" id="UP000000541">
    <property type="component" value="Chromosome"/>
</dbReference>
<dbReference type="Proteomes" id="UP000002670">
    <property type="component" value="Chromosome"/>
</dbReference>
<dbReference type="GO" id="GO:0036382">
    <property type="term" value="F:flavin reductase (NADH) activity"/>
    <property type="evidence" value="ECO:0007669"/>
    <property type="project" value="UniProtKB-EC"/>
</dbReference>
<dbReference type="GO" id="GO:0010181">
    <property type="term" value="F:FMN binding"/>
    <property type="evidence" value="ECO:0007669"/>
    <property type="project" value="InterPro"/>
</dbReference>
<dbReference type="GO" id="GO:0051287">
    <property type="term" value="F:NAD binding"/>
    <property type="evidence" value="ECO:0007669"/>
    <property type="project" value="InterPro"/>
</dbReference>
<dbReference type="GO" id="GO:0016651">
    <property type="term" value="F:oxidoreductase activity, acting on NAD(P)H"/>
    <property type="evidence" value="ECO:0007669"/>
    <property type="project" value="InterPro"/>
</dbReference>
<dbReference type="GO" id="GO:0042602">
    <property type="term" value="F:riboflavin reductase (NADPH) activity"/>
    <property type="evidence" value="ECO:0007669"/>
    <property type="project" value="TreeGrafter"/>
</dbReference>
<dbReference type="GO" id="GO:0042537">
    <property type="term" value="P:benzene-containing compound metabolic process"/>
    <property type="evidence" value="ECO:0007669"/>
    <property type="project" value="InterPro"/>
</dbReference>
<dbReference type="GO" id="GO:0006208">
    <property type="term" value="P:pyrimidine nucleobase catabolic process"/>
    <property type="evidence" value="ECO:0007669"/>
    <property type="project" value="TreeGrafter"/>
</dbReference>
<dbReference type="FunFam" id="2.30.110.10:FF:000002">
    <property type="entry name" value="FMN reductase (NADH) RutF"/>
    <property type="match status" value="1"/>
</dbReference>
<dbReference type="Gene3D" id="2.30.110.10">
    <property type="entry name" value="Electron Transport, Fmn-binding Protein, Chain A"/>
    <property type="match status" value="1"/>
</dbReference>
<dbReference type="InterPro" id="IPR002563">
    <property type="entry name" value="Flavin_Rdtase-like_dom"/>
</dbReference>
<dbReference type="InterPro" id="IPR011982">
    <property type="entry name" value="HPA_mOase_red"/>
</dbReference>
<dbReference type="InterPro" id="IPR050268">
    <property type="entry name" value="NADH-dep_flavin_reductase"/>
</dbReference>
<dbReference type="InterPro" id="IPR012349">
    <property type="entry name" value="Split_barrel_FMN-bd"/>
</dbReference>
<dbReference type="NCBIfam" id="TIGR02296">
    <property type="entry name" value="HpaC"/>
    <property type="match status" value="1"/>
</dbReference>
<dbReference type="NCBIfam" id="NF012030">
    <property type="entry name" value="PRK15486.1"/>
    <property type="match status" value="1"/>
</dbReference>
<dbReference type="PANTHER" id="PTHR30466">
    <property type="entry name" value="FLAVIN REDUCTASE"/>
    <property type="match status" value="1"/>
</dbReference>
<dbReference type="PANTHER" id="PTHR30466:SF1">
    <property type="entry name" value="FMN REDUCTASE (NADH) RUTF"/>
    <property type="match status" value="1"/>
</dbReference>
<dbReference type="Pfam" id="PF01613">
    <property type="entry name" value="Flavin_Reduct"/>
    <property type="match status" value="1"/>
</dbReference>
<dbReference type="SMART" id="SM00903">
    <property type="entry name" value="Flavin_Reduct"/>
    <property type="match status" value="1"/>
</dbReference>
<dbReference type="SUPFAM" id="SSF50475">
    <property type="entry name" value="FMN-binding split barrel"/>
    <property type="match status" value="1"/>
</dbReference>
<evidence type="ECO:0000250" key="1"/>
<evidence type="ECO:0000305" key="2"/>
<reference key="1">
    <citation type="journal article" date="2001" name="Nature">
        <title>Complete genome sequence of a multiple drug resistant Salmonella enterica serovar Typhi CT18.</title>
        <authorList>
            <person name="Parkhill J."/>
            <person name="Dougan G."/>
            <person name="James K.D."/>
            <person name="Thomson N.R."/>
            <person name="Pickard D."/>
            <person name="Wain J."/>
            <person name="Churcher C.M."/>
            <person name="Mungall K.L."/>
            <person name="Bentley S.D."/>
            <person name="Holden M.T.G."/>
            <person name="Sebaihia M."/>
            <person name="Baker S."/>
            <person name="Basham D."/>
            <person name="Brooks K."/>
            <person name="Chillingworth T."/>
            <person name="Connerton P."/>
            <person name="Cronin A."/>
            <person name="Davis P."/>
            <person name="Davies R.M."/>
            <person name="Dowd L."/>
            <person name="White N."/>
            <person name="Farrar J."/>
            <person name="Feltwell T."/>
            <person name="Hamlin N."/>
            <person name="Haque A."/>
            <person name="Hien T.T."/>
            <person name="Holroyd S."/>
            <person name="Jagels K."/>
            <person name="Krogh A."/>
            <person name="Larsen T.S."/>
            <person name="Leather S."/>
            <person name="Moule S."/>
            <person name="O'Gaora P."/>
            <person name="Parry C."/>
            <person name="Quail M.A."/>
            <person name="Rutherford K.M."/>
            <person name="Simmonds M."/>
            <person name="Skelton J."/>
            <person name="Stevens K."/>
            <person name="Whitehead S."/>
            <person name="Barrell B.G."/>
        </authorList>
    </citation>
    <scope>NUCLEOTIDE SEQUENCE [LARGE SCALE GENOMIC DNA]</scope>
    <source>
        <strain>CT18</strain>
    </source>
</reference>
<reference key="2">
    <citation type="journal article" date="2003" name="J. Bacteriol.">
        <title>Comparative genomics of Salmonella enterica serovar Typhi strains Ty2 and CT18.</title>
        <authorList>
            <person name="Deng W."/>
            <person name="Liou S.-R."/>
            <person name="Plunkett G. III"/>
            <person name="Mayhew G.F."/>
            <person name="Rose D.J."/>
            <person name="Burland V."/>
            <person name="Kodoyianni V."/>
            <person name="Schwartz D.C."/>
            <person name="Blattner F.R."/>
        </authorList>
    </citation>
    <scope>NUCLEOTIDE SEQUENCE [LARGE SCALE GENOMIC DNA]</scope>
    <source>
        <strain>ATCC 700931 / Ty2</strain>
    </source>
</reference>
<protein>
    <recommendedName>
        <fullName>4-hydroxyphenylacetate 3-monooxygenase reductase component</fullName>
        <ecNumber>1.5.1.36</ecNumber>
    </recommendedName>
    <alternativeName>
        <fullName>4-HPA 3-monooxygenase small component</fullName>
    </alternativeName>
    <alternativeName>
        <fullName>Flavin:NADH reductase</fullName>
    </alternativeName>
</protein>
<gene>
    <name type="primary">hpaC</name>
    <name type="ordered locus">STY1130</name>
    <name type="ordered locus">t1821</name>
</gene>
<organism>
    <name type="scientific">Salmonella typhi</name>
    <dbReference type="NCBI Taxonomy" id="90370"/>
    <lineage>
        <taxon>Bacteria</taxon>
        <taxon>Pseudomonadati</taxon>
        <taxon>Pseudomonadota</taxon>
        <taxon>Gammaproteobacteria</taxon>
        <taxon>Enterobacterales</taxon>
        <taxon>Enterobacteriaceae</taxon>
        <taxon>Salmonella</taxon>
    </lineage>
</organism>
<proteinExistence type="inferred from homology"/>
<name>HPAC_SALTI</name>
<accession>Q8Z7Q5</accession>
<keyword id="KW-0058">Aromatic hydrocarbons catabolism</keyword>
<keyword id="KW-0285">Flavoprotein</keyword>
<keyword id="KW-0288">FMN</keyword>
<keyword id="KW-0520">NAD</keyword>
<keyword id="KW-0560">Oxidoreductase</keyword>
<comment type="function">
    <text evidence="1">Catalyzes the reduction of free flavins (FMN, FAD and riboflavin) by NADH. Subsequently, the reduced flavins diffuse to the large HpaB component or to other electron acceptors such as cytochrome c and Fe(3+) ion (By similarity).</text>
</comment>
<comment type="catalytic activity">
    <reaction>
        <text>a reduced flavin + NAD(+) = an oxidized flavin + NADH + 2 H(+)</text>
        <dbReference type="Rhea" id="RHEA:31303"/>
        <dbReference type="ChEBI" id="CHEBI:15378"/>
        <dbReference type="ChEBI" id="CHEBI:57540"/>
        <dbReference type="ChEBI" id="CHEBI:57945"/>
        <dbReference type="ChEBI" id="CHEBI:60531"/>
        <dbReference type="ChEBI" id="CHEBI:62787"/>
        <dbReference type="EC" id="1.5.1.36"/>
    </reaction>
</comment>
<comment type="pathway">
    <text>Aromatic compound metabolism; 4-hydroxyphenylacetate degradation; pyruvate and succinate semialdehyde from 4-hydroxyphenylacetate: step 1/7.</text>
</comment>
<comment type="subunit">
    <text evidence="1 2">Homodimer (Probable). 4-HPA 3-monooxygenase consists of a reductase component HpaC and an oxygenase component HpaB (By similarity).</text>
</comment>
<comment type="similarity">
    <text evidence="2">Belongs to the non-flavoprotein flavin reductase family. HpaC subfamily.</text>
</comment>